<sequence length="216" mass="23536">MAVALWYCPPANSPCYDTVNSLILSLQTLFPDAVLFEPHVTITSQLRCDSADDAAAVLAAACAALRACRPQLDARGSPVVRFDAVAVGRRYFDKVHLACAHDRFLYGVAQVIRELFVQDPPDPAAAADWVHSSFRPHLSLVYSDLYHVDQALLRVLRQRIGDALGAALLPHPPAPGLQALWALQPPLDGWSIPGSFKVVRCEGPVRDWHVLAAADL</sequence>
<keyword id="KW-0333">Golgi apparatus</keyword>
<keyword id="KW-0378">Hydrolase</keyword>
<keyword id="KW-1185">Reference proteome</keyword>
<organism>
    <name type="scientific">Eremothecium gossypii (strain ATCC 10895 / CBS 109.51 / FGSC 9923 / NRRL Y-1056)</name>
    <name type="common">Yeast</name>
    <name type="synonym">Ashbya gossypii</name>
    <dbReference type="NCBI Taxonomy" id="284811"/>
    <lineage>
        <taxon>Eukaryota</taxon>
        <taxon>Fungi</taxon>
        <taxon>Dikarya</taxon>
        <taxon>Ascomycota</taxon>
        <taxon>Saccharomycotina</taxon>
        <taxon>Saccharomycetes</taxon>
        <taxon>Saccharomycetales</taxon>
        <taxon>Saccharomycetaceae</taxon>
        <taxon>Eremothecium</taxon>
    </lineage>
</organism>
<reference key="1">
    <citation type="journal article" date="2004" name="Science">
        <title>The Ashbya gossypii genome as a tool for mapping the ancient Saccharomyces cerevisiae genome.</title>
        <authorList>
            <person name="Dietrich F.S."/>
            <person name="Voegeli S."/>
            <person name="Brachat S."/>
            <person name="Lerch A."/>
            <person name="Gates K."/>
            <person name="Steiner S."/>
            <person name="Mohr C."/>
            <person name="Poehlmann R."/>
            <person name="Luedi P."/>
            <person name="Choi S."/>
            <person name="Wing R.A."/>
            <person name="Flavier A."/>
            <person name="Gaffney T.D."/>
            <person name="Philippsen P."/>
        </authorList>
    </citation>
    <scope>NUCLEOTIDE SEQUENCE [LARGE SCALE GENOMIC DNA]</scope>
    <source>
        <strain>ATCC 10895 / CBS 109.51 / FGSC 9923 / NRRL Y-1056</strain>
    </source>
</reference>
<reference key="2">
    <citation type="journal article" date="2013" name="G3 (Bethesda)">
        <title>Genomes of Ashbya fungi isolated from insects reveal four mating-type loci, numerous translocations, lack of transposons, and distinct gene duplications.</title>
        <authorList>
            <person name="Dietrich F.S."/>
            <person name="Voegeli S."/>
            <person name="Kuo S."/>
            <person name="Philippsen P."/>
        </authorList>
    </citation>
    <scope>GENOME REANNOTATION</scope>
    <source>
        <strain>ATCC 10895 / CBS 109.51 / FGSC 9923 / NRRL Y-1056</strain>
    </source>
</reference>
<dbReference type="EC" id="3.1.4.37"/>
<dbReference type="EMBL" id="AE016818">
    <property type="protein sequence ID" value="AAS52471.1"/>
    <property type="molecule type" value="Genomic_DNA"/>
</dbReference>
<dbReference type="RefSeq" id="NP_984647.1">
    <property type="nucleotide sequence ID" value="NM_210000.1"/>
</dbReference>
<dbReference type="SMR" id="Q758H6"/>
<dbReference type="FunCoup" id="Q758H6">
    <property type="interactions" value="14"/>
</dbReference>
<dbReference type="STRING" id="284811.Q758H6"/>
<dbReference type="EnsemblFungi" id="AAS52471">
    <property type="protein sequence ID" value="AAS52471"/>
    <property type="gene ID" value="AGOS_AEL214C"/>
</dbReference>
<dbReference type="GeneID" id="4620829"/>
<dbReference type="KEGG" id="ago:AGOS_AEL214C"/>
<dbReference type="eggNOG" id="ENOG502RY6J">
    <property type="taxonomic scope" value="Eukaryota"/>
</dbReference>
<dbReference type="HOGENOM" id="CLU_088289_0_0_1"/>
<dbReference type="InParanoid" id="Q758H6"/>
<dbReference type="OMA" id="WYCPPAN"/>
<dbReference type="OrthoDB" id="514292at2759"/>
<dbReference type="Proteomes" id="UP000000591">
    <property type="component" value="Chromosome V"/>
</dbReference>
<dbReference type="GO" id="GO:0005794">
    <property type="term" value="C:Golgi apparatus"/>
    <property type="evidence" value="ECO:0007669"/>
    <property type="project" value="UniProtKB-SubCell"/>
</dbReference>
<dbReference type="GO" id="GO:0004113">
    <property type="term" value="F:2',3'-cyclic-nucleotide 3'-phosphodiesterase activity"/>
    <property type="evidence" value="ECO:0000318"/>
    <property type="project" value="GO_Central"/>
</dbReference>
<dbReference type="GO" id="GO:0009187">
    <property type="term" value="P:cyclic nucleotide metabolic process"/>
    <property type="evidence" value="ECO:0000318"/>
    <property type="project" value="GO_Central"/>
</dbReference>
<dbReference type="FunFam" id="3.90.1140.10:FF:000021">
    <property type="entry name" value="AaceriAEL214Cp"/>
    <property type="match status" value="1"/>
</dbReference>
<dbReference type="Gene3D" id="3.90.1140.10">
    <property type="entry name" value="Cyclic phosphodiesterase"/>
    <property type="match status" value="1"/>
</dbReference>
<dbReference type="InterPro" id="IPR012386">
    <property type="entry name" value="Cyclic-nucl_3Pdiesterase"/>
</dbReference>
<dbReference type="InterPro" id="IPR009097">
    <property type="entry name" value="Cyclic_Pdiesterase"/>
</dbReference>
<dbReference type="PANTHER" id="PTHR28141">
    <property type="entry name" value="2',3'-CYCLIC-NUCLEOTIDE 3'-PHOSPHODIESTERASE"/>
    <property type="match status" value="1"/>
</dbReference>
<dbReference type="PANTHER" id="PTHR28141:SF1">
    <property type="entry name" value="2',3'-CYCLIC-NUCLEOTIDE 3'-PHOSPHODIESTERASE"/>
    <property type="match status" value="1"/>
</dbReference>
<dbReference type="Pfam" id="PF07823">
    <property type="entry name" value="CPDase"/>
    <property type="match status" value="1"/>
</dbReference>
<dbReference type="SUPFAM" id="SSF55144">
    <property type="entry name" value="LigT-like"/>
    <property type="match status" value="1"/>
</dbReference>
<name>CPD1_EREGS</name>
<feature type="chain" id="PRO_0000280674" description="2',3'-cyclic-nucleotide 3'-phosphodiesterase">
    <location>
        <begin position="1"/>
        <end position="216"/>
    </location>
</feature>
<feature type="active site" description="Proton donor/acceptor" evidence="1">
    <location>
        <position position="39"/>
    </location>
</feature>
<feature type="active site" description="Proton donor/acceptor" evidence="1">
    <location>
        <position position="137"/>
    </location>
</feature>
<feature type="binding site" evidence="1">
    <location>
        <position position="41"/>
    </location>
    <ligand>
        <name>substrate</name>
    </ligand>
</feature>
<feature type="binding site" evidence="1">
    <location>
        <position position="139"/>
    </location>
    <ligand>
        <name>substrate</name>
    </ligand>
</feature>
<feature type="binding site" evidence="1">
    <location>
        <position position="142"/>
    </location>
    <ligand>
        <name>substrate</name>
    </ligand>
</feature>
<accession>Q758H6</accession>
<gene>
    <name type="primary">CPD1</name>
    <name type="ordered locus">AEL214C</name>
</gene>
<proteinExistence type="inferred from homology"/>
<comment type="function">
    <text evidence="1">Involved in the metabolism of ADP-ribose 1',2'-cyclic phosphate which is produced as a consequence of tRNA splicing.</text>
</comment>
<comment type="catalytic activity">
    <reaction>
        <text>a nucleoside 2',3'-cyclic phosphate + H2O = a nucleoside 2'-phosphate + H(+)</text>
        <dbReference type="Rhea" id="RHEA:14489"/>
        <dbReference type="ChEBI" id="CHEBI:15377"/>
        <dbReference type="ChEBI" id="CHEBI:15378"/>
        <dbReference type="ChEBI" id="CHEBI:66954"/>
        <dbReference type="ChEBI" id="CHEBI:78552"/>
        <dbReference type="EC" id="3.1.4.37"/>
    </reaction>
</comment>
<comment type="subcellular location">
    <subcellularLocation>
        <location evidence="1">Golgi apparatus</location>
    </subcellularLocation>
</comment>
<comment type="similarity">
    <text evidence="2">Belongs to the 2H phosphoesterase superfamily. CPD1 family.</text>
</comment>
<evidence type="ECO:0000250" key="1"/>
<evidence type="ECO:0000305" key="2"/>
<protein>
    <recommendedName>
        <fullName>2',3'-cyclic-nucleotide 3'-phosphodiesterase</fullName>
        <shortName>CPDase</shortName>
        <ecNumber>3.1.4.37</ecNumber>
    </recommendedName>
</protein>